<reference key="1">
    <citation type="submission" date="2008-04" db="EMBL/GenBank/DDBJ databases">
        <title>Complete sequence of Clostridium botulinum strain Eklund.</title>
        <authorList>
            <person name="Brinkac L.M."/>
            <person name="Brown J.L."/>
            <person name="Bruce D."/>
            <person name="Detter C."/>
            <person name="Munk C."/>
            <person name="Smith L.A."/>
            <person name="Smith T.J."/>
            <person name="Sutton G."/>
            <person name="Brettin T.S."/>
        </authorList>
    </citation>
    <scope>NUCLEOTIDE SEQUENCE [LARGE SCALE GENOMIC DNA]</scope>
    <source>
        <strain>Eklund 17B / Type B</strain>
    </source>
</reference>
<accession>B2TPD4</accession>
<sequence length="427" mass="47203">MNNLEIFEESKKYMPGGVNSPVRCFKEMGMNPPVIKSGKGVIIKDEDGKEYIDFVLAWGPLLLGHCDEDVVKAIKETSENALAFGAPTKLELELSKFMCENLDNVDMIRMVNSGTEATMSAVKLARGYTGKSKIVKFAGCYHGHFDGFLIEAGSGVLTEGIPGSLGVPKESVENTLIGLYNDKTQIKELFKKQGNEIAAVIIEPVAGNMGVIKANEDFIKELRSLCDEYGALLIFDEVMTGFRVAFKGAQTLFDIKPDLITYAKIMGGGLPCGAYAGKKEIMEKLSPCGGVYQAGTMSGNPVVMSAGLATLTKLKNNIELYDHVEKIGEKLQEGLIKISKENDVPLIINRVGGMLTLFFTELEKVNTYEDVKTCDNERFKRYFKHMLNEGFNIAPSQFEAMFLSVKHTEEHIDKFLDAFKRFAINEK</sequence>
<protein>
    <recommendedName>
        <fullName evidence="1">Glutamate-1-semialdehyde 2,1-aminomutase</fullName>
        <shortName evidence="1">GSA</shortName>
        <ecNumber evidence="1">5.4.3.8</ecNumber>
    </recommendedName>
    <alternativeName>
        <fullName evidence="1">Glutamate-1-semialdehyde aminotransferase</fullName>
        <shortName evidence="1">GSA-AT</shortName>
    </alternativeName>
</protein>
<feature type="chain" id="PRO_1000121871" description="Glutamate-1-semialdehyde 2,1-aminomutase">
    <location>
        <begin position="1"/>
        <end position="427"/>
    </location>
</feature>
<feature type="modified residue" description="N6-(pyridoxal phosphate)lysine" evidence="1">
    <location>
        <position position="264"/>
    </location>
</feature>
<evidence type="ECO:0000255" key="1">
    <source>
        <dbReference type="HAMAP-Rule" id="MF_00375"/>
    </source>
</evidence>
<organism>
    <name type="scientific">Clostridium botulinum (strain Eklund 17B / Type B)</name>
    <dbReference type="NCBI Taxonomy" id="935198"/>
    <lineage>
        <taxon>Bacteria</taxon>
        <taxon>Bacillati</taxon>
        <taxon>Bacillota</taxon>
        <taxon>Clostridia</taxon>
        <taxon>Eubacteriales</taxon>
        <taxon>Clostridiaceae</taxon>
        <taxon>Clostridium</taxon>
    </lineage>
</organism>
<keyword id="KW-0963">Cytoplasm</keyword>
<keyword id="KW-0413">Isomerase</keyword>
<keyword id="KW-0627">Porphyrin biosynthesis</keyword>
<keyword id="KW-0663">Pyridoxal phosphate</keyword>
<gene>
    <name evidence="1" type="primary">hemL</name>
    <name type="ordered locus">CLL_A2904</name>
</gene>
<name>GSA_CLOBB</name>
<comment type="catalytic activity">
    <reaction evidence="1">
        <text>(S)-4-amino-5-oxopentanoate = 5-aminolevulinate</text>
        <dbReference type="Rhea" id="RHEA:14265"/>
        <dbReference type="ChEBI" id="CHEBI:57501"/>
        <dbReference type="ChEBI" id="CHEBI:356416"/>
        <dbReference type="EC" id="5.4.3.8"/>
    </reaction>
</comment>
<comment type="cofactor">
    <cofactor evidence="1">
        <name>pyridoxal 5'-phosphate</name>
        <dbReference type="ChEBI" id="CHEBI:597326"/>
    </cofactor>
</comment>
<comment type="pathway">
    <text evidence="1">Porphyrin-containing compound metabolism; protoporphyrin-IX biosynthesis; 5-aminolevulinate from L-glutamyl-tRNA(Glu): step 2/2.</text>
</comment>
<comment type="subunit">
    <text evidence="1">Homodimer.</text>
</comment>
<comment type="subcellular location">
    <subcellularLocation>
        <location evidence="1">Cytoplasm</location>
    </subcellularLocation>
</comment>
<comment type="similarity">
    <text evidence="1">Belongs to the class-III pyridoxal-phosphate-dependent aminotransferase family. HemL subfamily.</text>
</comment>
<proteinExistence type="inferred from homology"/>
<dbReference type="EC" id="5.4.3.8" evidence="1"/>
<dbReference type="EMBL" id="CP001056">
    <property type="protein sequence ID" value="ACD21981.1"/>
    <property type="molecule type" value="Genomic_DNA"/>
</dbReference>
<dbReference type="SMR" id="B2TPD4"/>
<dbReference type="KEGG" id="cbk:CLL_A2904"/>
<dbReference type="PATRIC" id="fig|935198.13.peg.2866"/>
<dbReference type="HOGENOM" id="CLU_016922_1_5_9"/>
<dbReference type="UniPathway" id="UPA00251">
    <property type="reaction ID" value="UER00317"/>
</dbReference>
<dbReference type="Proteomes" id="UP000001195">
    <property type="component" value="Chromosome"/>
</dbReference>
<dbReference type="GO" id="GO:0005737">
    <property type="term" value="C:cytoplasm"/>
    <property type="evidence" value="ECO:0007669"/>
    <property type="project" value="UniProtKB-SubCell"/>
</dbReference>
<dbReference type="GO" id="GO:0042286">
    <property type="term" value="F:glutamate-1-semialdehyde 2,1-aminomutase activity"/>
    <property type="evidence" value="ECO:0007669"/>
    <property type="project" value="UniProtKB-UniRule"/>
</dbReference>
<dbReference type="GO" id="GO:0030170">
    <property type="term" value="F:pyridoxal phosphate binding"/>
    <property type="evidence" value="ECO:0007669"/>
    <property type="project" value="InterPro"/>
</dbReference>
<dbReference type="GO" id="GO:0008483">
    <property type="term" value="F:transaminase activity"/>
    <property type="evidence" value="ECO:0007669"/>
    <property type="project" value="InterPro"/>
</dbReference>
<dbReference type="GO" id="GO:0006782">
    <property type="term" value="P:protoporphyrinogen IX biosynthetic process"/>
    <property type="evidence" value="ECO:0007669"/>
    <property type="project" value="UniProtKB-UniRule"/>
</dbReference>
<dbReference type="CDD" id="cd00610">
    <property type="entry name" value="OAT_like"/>
    <property type="match status" value="1"/>
</dbReference>
<dbReference type="FunFam" id="3.40.640.10:FF:000021">
    <property type="entry name" value="Glutamate-1-semialdehyde 2,1-aminomutase"/>
    <property type="match status" value="1"/>
</dbReference>
<dbReference type="Gene3D" id="3.90.1150.10">
    <property type="entry name" value="Aspartate Aminotransferase, domain 1"/>
    <property type="match status" value="1"/>
</dbReference>
<dbReference type="Gene3D" id="3.40.640.10">
    <property type="entry name" value="Type I PLP-dependent aspartate aminotransferase-like (Major domain)"/>
    <property type="match status" value="1"/>
</dbReference>
<dbReference type="HAMAP" id="MF_00375">
    <property type="entry name" value="HemL_aminotrans_3"/>
    <property type="match status" value="1"/>
</dbReference>
<dbReference type="InterPro" id="IPR004639">
    <property type="entry name" value="4pyrrol_synth_GluAld_NH2Trfase"/>
</dbReference>
<dbReference type="InterPro" id="IPR005814">
    <property type="entry name" value="Aminotrans_3"/>
</dbReference>
<dbReference type="InterPro" id="IPR049704">
    <property type="entry name" value="Aminotrans_3_PPA_site"/>
</dbReference>
<dbReference type="InterPro" id="IPR015424">
    <property type="entry name" value="PyrdxlP-dep_Trfase"/>
</dbReference>
<dbReference type="InterPro" id="IPR015421">
    <property type="entry name" value="PyrdxlP-dep_Trfase_major"/>
</dbReference>
<dbReference type="InterPro" id="IPR015422">
    <property type="entry name" value="PyrdxlP-dep_Trfase_small"/>
</dbReference>
<dbReference type="NCBIfam" id="TIGR00713">
    <property type="entry name" value="hemL"/>
    <property type="match status" value="1"/>
</dbReference>
<dbReference type="NCBIfam" id="NF000818">
    <property type="entry name" value="PRK00062.1"/>
    <property type="match status" value="1"/>
</dbReference>
<dbReference type="PANTHER" id="PTHR43713">
    <property type="entry name" value="GLUTAMATE-1-SEMIALDEHYDE 2,1-AMINOMUTASE"/>
    <property type="match status" value="1"/>
</dbReference>
<dbReference type="PANTHER" id="PTHR43713:SF3">
    <property type="entry name" value="GLUTAMATE-1-SEMIALDEHYDE 2,1-AMINOMUTASE 1, CHLOROPLASTIC-RELATED"/>
    <property type="match status" value="1"/>
</dbReference>
<dbReference type="Pfam" id="PF00202">
    <property type="entry name" value="Aminotran_3"/>
    <property type="match status" value="1"/>
</dbReference>
<dbReference type="SUPFAM" id="SSF53383">
    <property type="entry name" value="PLP-dependent transferases"/>
    <property type="match status" value="1"/>
</dbReference>
<dbReference type="PROSITE" id="PS00600">
    <property type="entry name" value="AA_TRANSFER_CLASS_3"/>
    <property type="match status" value="1"/>
</dbReference>